<protein>
    <recommendedName>
        <fullName evidence="1">Endonuclease NucS</fullName>
        <ecNumber evidence="1">3.1.-.-</ecNumber>
    </recommendedName>
</protein>
<name>NUCS_CORU7</name>
<dbReference type="EC" id="3.1.-.-" evidence="1"/>
<dbReference type="EMBL" id="AM942444">
    <property type="protein sequence ID" value="CAQ04679.1"/>
    <property type="molecule type" value="Genomic_DNA"/>
</dbReference>
<dbReference type="RefSeq" id="WP_012359970.1">
    <property type="nucleotide sequence ID" value="NC_010545.1"/>
</dbReference>
<dbReference type="SMR" id="B1VFZ0"/>
<dbReference type="STRING" id="504474.cu0719"/>
<dbReference type="GeneID" id="60603495"/>
<dbReference type="KEGG" id="cur:cu0719"/>
<dbReference type="eggNOG" id="COG1637">
    <property type="taxonomic scope" value="Bacteria"/>
</dbReference>
<dbReference type="HOGENOM" id="CLU_069350_0_0_11"/>
<dbReference type="Proteomes" id="UP000001727">
    <property type="component" value="Chromosome"/>
</dbReference>
<dbReference type="GO" id="GO:0005737">
    <property type="term" value="C:cytoplasm"/>
    <property type="evidence" value="ECO:0007669"/>
    <property type="project" value="UniProtKB-SubCell"/>
</dbReference>
<dbReference type="GO" id="GO:0003677">
    <property type="term" value="F:DNA binding"/>
    <property type="evidence" value="ECO:0007669"/>
    <property type="project" value="UniProtKB-KW"/>
</dbReference>
<dbReference type="GO" id="GO:0000014">
    <property type="term" value="F:single-stranded DNA endodeoxyribonuclease activity"/>
    <property type="evidence" value="ECO:0007669"/>
    <property type="project" value="UniProtKB-UniRule"/>
</dbReference>
<dbReference type="CDD" id="cd22341">
    <property type="entry name" value="NucS-like"/>
    <property type="match status" value="1"/>
</dbReference>
<dbReference type="Gene3D" id="2.70.180.20">
    <property type="match status" value="1"/>
</dbReference>
<dbReference type="Gene3D" id="3.40.1350.10">
    <property type="match status" value="1"/>
</dbReference>
<dbReference type="HAMAP" id="MF_00722">
    <property type="entry name" value="NucS"/>
    <property type="match status" value="1"/>
</dbReference>
<dbReference type="InterPro" id="IPR002793">
    <property type="entry name" value="Endonuclease_NucS"/>
</dbReference>
<dbReference type="InterPro" id="IPR048301">
    <property type="entry name" value="NucS_C"/>
</dbReference>
<dbReference type="InterPro" id="IPR048302">
    <property type="entry name" value="NucS_N"/>
</dbReference>
<dbReference type="InterPro" id="IPR049173">
    <property type="entry name" value="NucS_N_sf"/>
</dbReference>
<dbReference type="InterPro" id="IPR011856">
    <property type="entry name" value="tRNA_endonuc-like_dom_sf"/>
</dbReference>
<dbReference type="NCBIfam" id="NF002876">
    <property type="entry name" value="PRK03298.1"/>
    <property type="match status" value="1"/>
</dbReference>
<dbReference type="PANTHER" id="PTHR38814">
    <property type="entry name" value="ENDONUCLEASE NUCS"/>
    <property type="match status" value="1"/>
</dbReference>
<dbReference type="PANTHER" id="PTHR38814:SF1">
    <property type="entry name" value="ENDONUCLEASE NUCS"/>
    <property type="match status" value="1"/>
</dbReference>
<dbReference type="Pfam" id="PF01939">
    <property type="entry name" value="NucS_C"/>
    <property type="match status" value="1"/>
</dbReference>
<dbReference type="Pfam" id="PF21003">
    <property type="entry name" value="NucS_N"/>
    <property type="match status" value="1"/>
</dbReference>
<feature type="chain" id="PRO_1000198198" description="Endonuclease NucS">
    <location>
        <begin position="1"/>
        <end position="246"/>
    </location>
</feature>
<accession>B1VFZ0</accession>
<reference key="1">
    <citation type="journal article" date="2008" name="J. Biotechnol.">
        <title>The lifestyle of Corynebacterium urealyticum derived from its complete genome sequence established by pyrosequencing.</title>
        <authorList>
            <person name="Tauch A."/>
            <person name="Trost E."/>
            <person name="Tilker A."/>
            <person name="Ludewig U."/>
            <person name="Schneiker S."/>
            <person name="Goesmann A."/>
            <person name="Arnold W."/>
            <person name="Bekel T."/>
            <person name="Brinkrolf K."/>
            <person name="Brune I."/>
            <person name="Goetker S."/>
            <person name="Kalinowski J."/>
            <person name="Kamp P.-B."/>
            <person name="Lobo F.P."/>
            <person name="Viehoever P."/>
            <person name="Weisshaar B."/>
            <person name="Soriano F."/>
            <person name="Droege M."/>
            <person name="Puehler A."/>
        </authorList>
    </citation>
    <scope>NUCLEOTIDE SEQUENCE [LARGE SCALE GENOMIC DNA]</scope>
    <source>
        <strain>ATCC 43042 / DSM 7109</strain>
    </source>
</reference>
<evidence type="ECO:0000255" key="1">
    <source>
        <dbReference type="HAMAP-Rule" id="MF_00722"/>
    </source>
</evidence>
<comment type="function">
    <text evidence="1">Cleaves both 3' and 5' ssDNA extremities of branched DNA structures.</text>
</comment>
<comment type="subcellular location">
    <subcellularLocation>
        <location evidence="1">Cytoplasm</location>
    </subcellularLocation>
</comment>
<comment type="similarity">
    <text evidence="1">Belongs to the NucS endonuclease family.</text>
</comment>
<gene>
    <name evidence="1" type="primary">nucS</name>
    <name type="ordered locus">cu0719</name>
</gene>
<keyword id="KW-0963">Cytoplasm</keyword>
<keyword id="KW-0238">DNA-binding</keyword>
<keyword id="KW-0255">Endonuclease</keyword>
<keyword id="KW-0378">Hydrolase</keyword>
<keyword id="KW-0540">Nuclease</keyword>
<keyword id="KW-1185">Reference proteome</keyword>
<proteinExistence type="inferred from homology"/>
<sequence length="246" mass="27444">MRLIIATCAVDYVGRLEAHLPRADRLIMVKADGAVSIHADDRAYKPLNWMTPPCTTTEYRRAEALAEATDGKDPFLTLPELEDEDVEALWVVENPKGEQLRIQLFAVHSDQNFDLGEDPGLQKDGVEAHLQELLAEQIEILGEGYSLVRREYPTPIGPVDILTKDATGATVAVEIKRRGNIDGVEQLTRYVELLNRDELLAPVTGVFAAQEIKPQARTLAEDRGIRCVTLDYAAMRGTDDSEFRLF</sequence>
<organism>
    <name type="scientific">Corynebacterium urealyticum (strain ATCC 43042 / DSM 7109)</name>
    <dbReference type="NCBI Taxonomy" id="504474"/>
    <lineage>
        <taxon>Bacteria</taxon>
        <taxon>Bacillati</taxon>
        <taxon>Actinomycetota</taxon>
        <taxon>Actinomycetes</taxon>
        <taxon>Mycobacteriales</taxon>
        <taxon>Corynebacteriaceae</taxon>
        <taxon>Corynebacterium</taxon>
    </lineage>
</organism>